<reference key="1">
    <citation type="journal article" date="1997" name="J. Bacteriol.">
        <title>Complete genome sequence of Methanobacterium thermoautotrophicum deltaH: functional analysis and comparative genomics.</title>
        <authorList>
            <person name="Smith D.R."/>
            <person name="Doucette-Stamm L.A."/>
            <person name="Deloughery C."/>
            <person name="Lee H.-M."/>
            <person name="Dubois J."/>
            <person name="Aldredge T."/>
            <person name="Bashirzadeh R."/>
            <person name="Blakely D."/>
            <person name="Cook R."/>
            <person name="Gilbert K."/>
            <person name="Harrison D."/>
            <person name="Hoang L."/>
            <person name="Keagle P."/>
            <person name="Lumm W."/>
            <person name="Pothier B."/>
            <person name="Qiu D."/>
            <person name="Spadafora R."/>
            <person name="Vicare R."/>
            <person name="Wang Y."/>
            <person name="Wierzbowski J."/>
            <person name="Gibson R."/>
            <person name="Jiwani N."/>
            <person name="Caruso A."/>
            <person name="Bush D."/>
            <person name="Safer H."/>
            <person name="Patwell D."/>
            <person name="Prabhakar S."/>
            <person name="McDougall S."/>
            <person name="Shimer G."/>
            <person name="Goyal A."/>
            <person name="Pietrovski S."/>
            <person name="Church G.M."/>
            <person name="Daniels C.J."/>
            <person name="Mao J.-I."/>
            <person name="Rice P."/>
            <person name="Noelling J."/>
            <person name="Reeve J.N."/>
        </authorList>
    </citation>
    <scope>NUCLEOTIDE SEQUENCE [LARGE SCALE GENOMIC DNA]</scope>
    <source>
        <strain>ATCC 29096 / DSM 1053 / JCM 10044 / NBRC 100330 / Delta H</strain>
    </source>
</reference>
<evidence type="ECO:0000250" key="1">
    <source>
        <dbReference type="UniProtKB" id="Q57926"/>
    </source>
</evidence>
<evidence type="ECO:0000255" key="2">
    <source>
        <dbReference type="PROSITE-ProRule" id="PRU01151"/>
    </source>
</evidence>
<evidence type="ECO:0000305" key="3"/>
<proteinExistence type="inferred from homology"/>
<sequence length="391" mass="43966">MRYFVSPFNKEAELKFPDRITIYDTTLRDGEQTPGVCLGTEEKLEIARKLDELGIHQIESGFPVVSEQERVSVKSIANEGLNAEILALCRTKKDDIDAAIDCDVDGVITFMATSDLHLKHKLKLTREEALNVCMNSIEYAKDHGLFLAFSAEDATRTDLDFLKQIYRKAENYGADRVHIADTVGAISPQGMDYLVRELRRDIKVDIALHCHNDFGMALSNSIAGLLAGGTAVSTTVNGIGERAGNTSLEELIMALRIIYEVDLGFNIGVLYELSRLVEKHTRMKVPENKPIVGRNVFRHESGIHVDAVIEEPLTYEPFLPEMIGHQRKIVLGKHSGCRAVKAKLEEYGIDVTRDELCRIVEEVKKNREKGKYINDELFYRIVKSVRGPVDF</sequence>
<dbReference type="EC" id="2.3.3.14" evidence="1"/>
<dbReference type="EC" id="2.3.3.-" evidence="1"/>
<dbReference type="EMBL" id="AE000666">
    <property type="protein sequence ID" value="AAB86103.1"/>
    <property type="molecule type" value="Genomic_DNA"/>
</dbReference>
<dbReference type="PIR" id="H69084">
    <property type="entry name" value="H69084"/>
</dbReference>
<dbReference type="RefSeq" id="WP_010877238.1">
    <property type="nucleotide sequence ID" value="NC_000916.1"/>
</dbReference>
<dbReference type="SMR" id="O27667"/>
<dbReference type="FunCoup" id="O27667">
    <property type="interactions" value="256"/>
</dbReference>
<dbReference type="STRING" id="187420.MTH_1630"/>
<dbReference type="PaxDb" id="187420-MTH_1630"/>
<dbReference type="EnsemblBacteria" id="AAB86103">
    <property type="protein sequence ID" value="AAB86103"/>
    <property type="gene ID" value="MTH_1630"/>
</dbReference>
<dbReference type="KEGG" id="mth:MTH_1630"/>
<dbReference type="PATRIC" id="fig|187420.15.peg.1594"/>
<dbReference type="HOGENOM" id="CLU_022158_4_2_2"/>
<dbReference type="InParanoid" id="O27667"/>
<dbReference type="UniPathway" id="UPA00919"/>
<dbReference type="Proteomes" id="UP000005223">
    <property type="component" value="Chromosome"/>
</dbReference>
<dbReference type="GO" id="GO:0004410">
    <property type="term" value="F:homocitrate synthase activity"/>
    <property type="evidence" value="ECO:0007669"/>
    <property type="project" value="UniProtKB-EC"/>
</dbReference>
<dbReference type="GO" id="GO:0009058">
    <property type="term" value="P:biosynthetic process"/>
    <property type="evidence" value="ECO:0007669"/>
    <property type="project" value="UniProtKB-ARBA"/>
</dbReference>
<dbReference type="GO" id="GO:0019752">
    <property type="term" value="P:carboxylic acid metabolic process"/>
    <property type="evidence" value="ECO:0007669"/>
    <property type="project" value="InterPro"/>
</dbReference>
<dbReference type="CDD" id="cd07940">
    <property type="entry name" value="DRE_TIM_IPMS"/>
    <property type="match status" value="1"/>
</dbReference>
<dbReference type="FunFam" id="1.10.238.260:FF:000001">
    <property type="entry name" value="2-isopropylmalate synthase"/>
    <property type="match status" value="1"/>
</dbReference>
<dbReference type="FunFam" id="3.20.20.70:FF:000010">
    <property type="entry name" value="2-isopropylmalate synthase"/>
    <property type="match status" value="1"/>
</dbReference>
<dbReference type="Gene3D" id="1.10.238.260">
    <property type="match status" value="1"/>
</dbReference>
<dbReference type="Gene3D" id="3.20.20.70">
    <property type="entry name" value="Aldolase class I"/>
    <property type="match status" value="1"/>
</dbReference>
<dbReference type="InterPro" id="IPR002034">
    <property type="entry name" value="AIPM/Hcit_synth_CS"/>
</dbReference>
<dbReference type="InterPro" id="IPR013785">
    <property type="entry name" value="Aldolase_TIM"/>
</dbReference>
<dbReference type="InterPro" id="IPR011830">
    <property type="entry name" value="LEU1_arch"/>
</dbReference>
<dbReference type="InterPro" id="IPR054691">
    <property type="entry name" value="LeuA/HCS_post-cat"/>
</dbReference>
<dbReference type="InterPro" id="IPR000891">
    <property type="entry name" value="PYR_CT"/>
</dbReference>
<dbReference type="NCBIfam" id="TIGR02090">
    <property type="entry name" value="LEU1_arch"/>
    <property type="match status" value="1"/>
</dbReference>
<dbReference type="NCBIfam" id="NF002085">
    <property type="entry name" value="PRK00915.1-2"/>
    <property type="match status" value="1"/>
</dbReference>
<dbReference type="PANTHER" id="PTHR42880:SF2">
    <property type="entry name" value="(R)-CITRAMALATE SYNTHASE CIMA"/>
    <property type="match status" value="1"/>
</dbReference>
<dbReference type="PANTHER" id="PTHR42880">
    <property type="entry name" value="HOMOCITRATE SYNTHASE"/>
    <property type="match status" value="1"/>
</dbReference>
<dbReference type="Pfam" id="PF22617">
    <property type="entry name" value="HCS_D2"/>
    <property type="match status" value="1"/>
</dbReference>
<dbReference type="Pfam" id="PF00682">
    <property type="entry name" value="HMGL-like"/>
    <property type="match status" value="1"/>
</dbReference>
<dbReference type="SUPFAM" id="SSF51569">
    <property type="entry name" value="Aldolase"/>
    <property type="match status" value="1"/>
</dbReference>
<dbReference type="PROSITE" id="PS00815">
    <property type="entry name" value="AIPM_HOMOCIT_SYNTH_1"/>
    <property type="match status" value="1"/>
</dbReference>
<dbReference type="PROSITE" id="PS00816">
    <property type="entry name" value="AIPM_HOMOCIT_SYNTH_2"/>
    <property type="match status" value="1"/>
</dbReference>
<dbReference type="PROSITE" id="PS50991">
    <property type="entry name" value="PYR_CT"/>
    <property type="match status" value="1"/>
</dbReference>
<keyword id="KW-1185">Reference proteome</keyword>
<keyword id="KW-0808">Transferase</keyword>
<accession>O27667</accession>
<protein>
    <recommendedName>
        <fullName>Homocitrate synthase AksA</fullName>
        <ecNumber evidence="1">2.3.3.14</ecNumber>
    </recommendedName>
    <alternativeName>
        <fullName>(R)-homo(2)citrate synthase</fullName>
        <ecNumber evidence="1">2.3.3.-</ecNumber>
    </alternativeName>
    <alternativeName>
        <fullName>(R)-homo(3)citrate synthase</fullName>
        <ecNumber evidence="1">2.3.3.-</ecNumber>
    </alternativeName>
</protein>
<organism>
    <name type="scientific">Methanothermobacter thermautotrophicus (strain ATCC 29096 / DSM 1053 / JCM 10044 / NBRC 100330 / Delta H)</name>
    <name type="common">Methanobacterium thermoautotrophicum</name>
    <dbReference type="NCBI Taxonomy" id="187420"/>
    <lineage>
        <taxon>Archaea</taxon>
        <taxon>Methanobacteriati</taxon>
        <taxon>Methanobacteriota</taxon>
        <taxon>Methanomada group</taxon>
        <taxon>Methanobacteria</taxon>
        <taxon>Methanobacteriales</taxon>
        <taxon>Methanobacteriaceae</taxon>
        <taxon>Methanothermobacter</taxon>
    </lineage>
</organism>
<comment type="function">
    <text evidence="1">Catalyzes the condensation of alpha-ketoglutarate and acetyl-CoA to form (R)-homocitrate. Can also catalyze the condensation of alpha-ketoadipate with acetyl-CoA to form (R)-homo(2)citrate, and the condensation of alpha-ketopimelate with acetyl-CoA to form (R)-homo(3)citrate. These reactions are part of the biosynthesis pathway of coenzyme B and biotin.</text>
</comment>
<comment type="catalytic activity">
    <reaction evidence="1">
        <text>acetyl-CoA + 2-oxoglutarate + H2O = (2R)-homocitrate + CoA + H(+)</text>
        <dbReference type="Rhea" id="RHEA:12929"/>
        <dbReference type="ChEBI" id="CHEBI:15377"/>
        <dbReference type="ChEBI" id="CHEBI:15378"/>
        <dbReference type="ChEBI" id="CHEBI:16810"/>
        <dbReference type="ChEBI" id="CHEBI:57287"/>
        <dbReference type="ChEBI" id="CHEBI:57288"/>
        <dbReference type="ChEBI" id="CHEBI:58884"/>
        <dbReference type="EC" id="2.3.3.14"/>
    </reaction>
    <physiologicalReaction direction="left-to-right" evidence="1">
        <dbReference type="Rhea" id="RHEA:12930"/>
    </physiologicalReaction>
</comment>
<comment type="catalytic activity">
    <reaction evidence="1">
        <text>2-oxoadipate + acetyl-CoA + H2O = (R)-dihomocitrate + CoA + H(+)</text>
        <dbReference type="Rhea" id="RHEA:44924"/>
        <dbReference type="ChEBI" id="CHEBI:15377"/>
        <dbReference type="ChEBI" id="CHEBI:15378"/>
        <dbReference type="ChEBI" id="CHEBI:57287"/>
        <dbReference type="ChEBI" id="CHEBI:57288"/>
        <dbReference type="ChEBI" id="CHEBI:57499"/>
        <dbReference type="ChEBI" id="CHEBI:72697"/>
    </reaction>
    <physiologicalReaction direction="left-to-right" evidence="1">
        <dbReference type="Rhea" id="RHEA:44925"/>
    </physiologicalReaction>
</comment>
<comment type="catalytic activity">
    <reaction evidence="1">
        <text>2-oxoheptanedioate + acetyl-CoA + H2O = (R)-trihomocitrate + CoA + H(+)</text>
        <dbReference type="Rhea" id="RHEA:44928"/>
        <dbReference type="ChEBI" id="CHEBI:15377"/>
        <dbReference type="ChEBI" id="CHEBI:15378"/>
        <dbReference type="ChEBI" id="CHEBI:57287"/>
        <dbReference type="ChEBI" id="CHEBI:57288"/>
        <dbReference type="ChEBI" id="CHEBI:72699"/>
        <dbReference type="ChEBI" id="CHEBI:72701"/>
    </reaction>
    <physiologicalReaction direction="left-to-right" evidence="1">
        <dbReference type="Rhea" id="RHEA:44929"/>
    </physiologicalReaction>
</comment>
<comment type="pathway">
    <text evidence="1">Organic acid metabolism; 2-oxosuberate biosynthesis.</text>
</comment>
<comment type="similarity">
    <text evidence="3">Belongs to the alpha-IPM synthase/homocitrate synthase family.</text>
</comment>
<gene>
    <name type="primary">aksA</name>
    <name type="ordered locus">MTH_1630</name>
</gene>
<name>AKSA_METTH</name>
<feature type="chain" id="PRO_0000140416" description="Homocitrate synthase AksA">
    <location>
        <begin position="1"/>
        <end position="391"/>
    </location>
</feature>
<feature type="domain" description="Pyruvate carboxyltransferase" evidence="2">
    <location>
        <begin position="20"/>
        <end position="271"/>
    </location>
</feature>